<keyword id="KW-0687">Ribonucleoprotein</keyword>
<keyword id="KW-0689">Ribosomal protein</keyword>
<keyword id="KW-0694">RNA-binding</keyword>
<keyword id="KW-0699">rRNA-binding</keyword>
<evidence type="ECO:0000255" key="1">
    <source>
        <dbReference type="HAMAP-Rule" id="MF_01331"/>
    </source>
</evidence>
<evidence type="ECO:0000305" key="2"/>
<name>RL22_SALHS</name>
<feature type="chain" id="PRO_1000142305" description="Large ribosomal subunit protein uL22">
    <location>
        <begin position="1"/>
        <end position="110"/>
    </location>
</feature>
<protein>
    <recommendedName>
        <fullName evidence="1">Large ribosomal subunit protein uL22</fullName>
    </recommendedName>
    <alternativeName>
        <fullName evidence="2">50S ribosomal protein L22</fullName>
    </alternativeName>
</protein>
<dbReference type="EMBL" id="CP001120">
    <property type="protein sequence ID" value="ACF67718.1"/>
    <property type="molecule type" value="Genomic_DNA"/>
</dbReference>
<dbReference type="RefSeq" id="WP_000447529.1">
    <property type="nucleotide sequence ID" value="NC_011083.1"/>
</dbReference>
<dbReference type="SMR" id="B4TKL0"/>
<dbReference type="GeneID" id="93778672"/>
<dbReference type="KEGG" id="seh:SeHA_C3739"/>
<dbReference type="HOGENOM" id="CLU_083987_3_3_6"/>
<dbReference type="Proteomes" id="UP000001866">
    <property type="component" value="Chromosome"/>
</dbReference>
<dbReference type="GO" id="GO:0022625">
    <property type="term" value="C:cytosolic large ribosomal subunit"/>
    <property type="evidence" value="ECO:0007669"/>
    <property type="project" value="TreeGrafter"/>
</dbReference>
<dbReference type="GO" id="GO:0019843">
    <property type="term" value="F:rRNA binding"/>
    <property type="evidence" value="ECO:0007669"/>
    <property type="project" value="UniProtKB-UniRule"/>
</dbReference>
<dbReference type="GO" id="GO:0003735">
    <property type="term" value="F:structural constituent of ribosome"/>
    <property type="evidence" value="ECO:0007669"/>
    <property type="project" value="InterPro"/>
</dbReference>
<dbReference type="GO" id="GO:0006412">
    <property type="term" value="P:translation"/>
    <property type="evidence" value="ECO:0007669"/>
    <property type="project" value="UniProtKB-UniRule"/>
</dbReference>
<dbReference type="CDD" id="cd00336">
    <property type="entry name" value="Ribosomal_L22"/>
    <property type="match status" value="1"/>
</dbReference>
<dbReference type="FunFam" id="3.90.470.10:FF:000001">
    <property type="entry name" value="50S ribosomal protein L22"/>
    <property type="match status" value="1"/>
</dbReference>
<dbReference type="Gene3D" id="3.90.470.10">
    <property type="entry name" value="Ribosomal protein L22/L17"/>
    <property type="match status" value="1"/>
</dbReference>
<dbReference type="HAMAP" id="MF_01331_B">
    <property type="entry name" value="Ribosomal_uL22_B"/>
    <property type="match status" value="1"/>
</dbReference>
<dbReference type="InterPro" id="IPR001063">
    <property type="entry name" value="Ribosomal_uL22"/>
</dbReference>
<dbReference type="InterPro" id="IPR005727">
    <property type="entry name" value="Ribosomal_uL22_bac/chlpt-type"/>
</dbReference>
<dbReference type="InterPro" id="IPR047867">
    <property type="entry name" value="Ribosomal_uL22_bac/org-type"/>
</dbReference>
<dbReference type="InterPro" id="IPR018260">
    <property type="entry name" value="Ribosomal_uL22_CS"/>
</dbReference>
<dbReference type="InterPro" id="IPR036394">
    <property type="entry name" value="Ribosomal_uL22_sf"/>
</dbReference>
<dbReference type="NCBIfam" id="TIGR01044">
    <property type="entry name" value="rplV_bact"/>
    <property type="match status" value="1"/>
</dbReference>
<dbReference type="PANTHER" id="PTHR13501">
    <property type="entry name" value="CHLOROPLAST 50S RIBOSOMAL PROTEIN L22-RELATED"/>
    <property type="match status" value="1"/>
</dbReference>
<dbReference type="PANTHER" id="PTHR13501:SF8">
    <property type="entry name" value="LARGE RIBOSOMAL SUBUNIT PROTEIN UL22M"/>
    <property type="match status" value="1"/>
</dbReference>
<dbReference type="Pfam" id="PF00237">
    <property type="entry name" value="Ribosomal_L22"/>
    <property type="match status" value="1"/>
</dbReference>
<dbReference type="SUPFAM" id="SSF54843">
    <property type="entry name" value="Ribosomal protein L22"/>
    <property type="match status" value="1"/>
</dbReference>
<dbReference type="PROSITE" id="PS00464">
    <property type="entry name" value="RIBOSOMAL_L22"/>
    <property type="match status" value="1"/>
</dbReference>
<comment type="function">
    <text evidence="1">This protein binds specifically to 23S rRNA; its binding is stimulated by other ribosomal proteins, e.g. L4, L17, and L20. It is important during the early stages of 50S assembly. It makes multiple contacts with different domains of the 23S rRNA in the assembled 50S subunit and ribosome (By similarity).</text>
</comment>
<comment type="function">
    <text evidence="1">The globular domain of the protein is located near the polypeptide exit tunnel on the outside of the subunit, while an extended beta-hairpin is found that lines the wall of the exit tunnel in the center of the 70S ribosome.</text>
</comment>
<comment type="subunit">
    <text evidence="1">Part of the 50S ribosomal subunit.</text>
</comment>
<comment type="similarity">
    <text evidence="1">Belongs to the universal ribosomal protein uL22 family.</text>
</comment>
<gene>
    <name evidence="1" type="primary">rplV</name>
    <name type="ordered locus">SeHA_C3739</name>
</gene>
<sequence>METIAKHRHARSSAQKVRLVADLIRGKKVSQALDILTYTNKKAAVLVKKVLESAIANAEHNDGADIDDLKVTKIFVDEGPSMKRIMPRAKGRADRILKRTSHITVVVSDR</sequence>
<organism>
    <name type="scientific">Salmonella heidelberg (strain SL476)</name>
    <dbReference type="NCBI Taxonomy" id="454169"/>
    <lineage>
        <taxon>Bacteria</taxon>
        <taxon>Pseudomonadati</taxon>
        <taxon>Pseudomonadota</taxon>
        <taxon>Gammaproteobacteria</taxon>
        <taxon>Enterobacterales</taxon>
        <taxon>Enterobacteriaceae</taxon>
        <taxon>Salmonella</taxon>
    </lineage>
</organism>
<accession>B4TKL0</accession>
<proteinExistence type="inferred from homology"/>
<reference key="1">
    <citation type="journal article" date="2011" name="J. Bacteriol.">
        <title>Comparative genomics of 28 Salmonella enterica isolates: evidence for CRISPR-mediated adaptive sublineage evolution.</title>
        <authorList>
            <person name="Fricke W.F."/>
            <person name="Mammel M.K."/>
            <person name="McDermott P.F."/>
            <person name="Tartera C."/>
            <person name="White D.G."/>
            <person name="Leclerc J.E."/>
            <person name="Ravel J."/>
            <person name="Cebula T.A."/>
        </authorList>
    </citation>
    <scope>NUCLEOTIDE SEQUENCE [LARGE SCALE GENOMIC DNA]</scope>
    <source>
        <strain>SL476</strain>
    </source>
</reference>